<evidence type="ECO:0000250" key="1"/>
<evidence type="ECO:0000255" key="2"/>
<evidence type="ECO:0000269" key="3">
    <source>
    </source>
</evidence>
<evidence type="ECO:0000305" key="4"/>
<gene>
    <name type="primary">elo-3</name>
    <name type="ORF">D2024.3</name>
</gene>
<comment type="function">
    <text evidence="1">Could be implicated in synthesis of very long chain fatty acids (By similarity). May be required for normally rapid growth.</text>
</comment>
<comment type="catalytic activity">
    <reaction>
        <text>a very-long-chain acyl-CoA + malonyl-CoA + H(+) = a very-long-chain 3-oxoacyl-CoA + CO2 + CoA</text>
        <dbReference type="Rhea" id="RHEA:32727"/>
        <dbReference type="ChEBI" id="CHEBI:15378"/>
        <dbReference type="ChEBI" id="CHEBI:16526"/>
        <dbReference type="ChEBI" id="CHEBI:57287"/>
        <dbReference type="ChEBI" id="CHEBI:57384"/>
        <dbReference type="ChEBI" id="CHEBI:90725"/>
        <dbReference type="ChEBI" id="CHEBI:90736"/>
        <dbReference type="EC" id="2.3.1.199"/>
    </reaction>
</comment>
<comment type="pathway">
    <text>Lipid metabolism; fatty acid biosynthesis.</text>
</comment>
<comment type="subcellular location">
    <subcellularLocation>
        <location evidence="4">Membrane</location>
        <topology evidence="4">Multi-pass membrane protein</topology>
    </subcellularLocation>
</comment>
<comment type="similarity">
    <text evidence="4">Belongs to the ELO family.</text>
</comment>
<name>ELO3_CAEEL</name>
<reference key="1">
    <citation type="journal article" date="1998" name="Science">
        <title>Genome sequence of the nematode C. elegans: a platform for investigating biology.</title>
        <authorList>
            <consortium name="The C. elegans sequencing consortium"/>
        </authorList>
    </citation>
    <scope>NUCLEOTIDE SEQUENCE [LARGE SCALE GENOMIC DNA]</scope>
    <source>
        <strain>Bristol N2</strain>
    </source>
</reference>
<reference key="2">
    <citation type="journal article" date="2007" name="Mol. Cell. Proteomics">
        <title>Proteomics reveals N-linked glycoprotein diversity in Caenorhabditis elegans and suggests an atypical translocation mechanism for integral membrane proteins.</title>
        <authorList>
            <person name="Kaji H."/>
            <person name="Kamiie J."/>
            <person name="Kawakami H."/>
            <person name="Kido K."/>
            <person name="Yamauchi Y."/>
            <person name="Shinkawa T."/>
            <person name="Taoka M."/>
            <person name="Takahashi N."/>
            <person name="Isobe T."/>
        </authorList>
    </citation>
    <scope>GLYCOSYLATION [LARGE SCALE ANALYSIS] AT ASN-14</scope>
    <scope>IDENTIFICATION BY MASS SPECTROMETRY</scope>
    <source>
        <strain>Bristol N2</strain>
    </source>
</reference>
<keyword id="KW-0275">Fatty acid biosynthesis</keyword>
<keyword id="KW-0276">Fatty acid metabolism</keyword>
<keyword id="KW-0325">Glycoprotein</keyword>
<keyword id="KW-0444">Lipid biosynthesis</keyword>
<keyword id="KW-0443">Lipid metabolism</keyword>
<keyword id="KW-0472">Membrane</keyword>
<keyword id="KW-1185">Reference proteome</keyword>
<keyword id="KW-0808">Transferase</keyword>
<keyword id="KW-0812">Transmembrane</keyword>
<keyword id="KW-1133">Transmembrane helix</keyword>
<feature type="chain" id="PRO_0000207546" description="Putative fatty acid elongase 3">
    <location>
        <begin position="1"/>
        <end position="320"/>
    </location>
</feature>
<feature type="transmembrane region" description="Helical" evidence="2">
    <location>
        <begin position="33"/>
        <end position="53"/>
    </location>
</feature>
<feature type="transmembrane region" description="Helical" evidence="2">
    <location>
        <begin position="67"/>
        <end position="87"/>
    </location>
</feature>
<feature type="transmembrane region" description="Helical" evidence="2">
    <location>
        <begin position="120"/>
        <end position="140"/>
    </location>
</feature>
<feature type="transmembrane region" description="Helical" evidence="2">
    <location>
        <begin position="145"/>
        <end position="165"/>
    </location>
</feature>
<feature type="transmembrane region" description="Helical" evidence="2">
    <location>
        <begin position="203"/>
        <end position="223"/>
    </location>
</feature>
<feature type="transmembrane region" description="Helical" evidence="2">
    <location>
        <begin position="242"/>
        <end position="262"/>
    </location>
</feature>
<feature type="glycosylation site" description="N-linked (GlcNAc...) asparagine" evidence="3">
    <location>
        <position position="14"/>
    </location>
</feature>
<organism>
    <name type="scientific">Caenorhabditis elegans</name>
    <dbReference type="NCBI Taxonomy" id="6239"/>
    <lineage>
        <taxon>Eukaryota</taxon>
        <taxon>Metazoa</taxon>
        <taxon>Ecdysozoa</taxon>
        <taxon>Nematoda</taxon>
        <taxon>Chromadorea</taxon>
        <taxon>Rhabditida</taxon>
        <taxon>Rhabditina</taxon>
        <taxon>Rhabditomorpha</taxon>
        <taxon>Rhabditoidea</taxon>
        <taxon>Rhabditidae</taxon>
        <taxon>Peloderinae</taxon>
        <taxon>Caenorhabditis</taxon>
    </lineage>
</organism>
<accession>P49191</accession>
<sequence>MAKYDYNPKYGLENYSIFLPFETSFDAFRSTTWMQNHWYQSITASVVYVAVIFTGKKIMEKYKPFQLDTPLFVWNSFLAIFSILGFLRMTPEFVWSWSAEGNSFKYSICHSSYAQGVTGFWTEQFAMSKLFELIDTIFIVLRKRPLIFLHWYHHVTVMIYTWHAYKDHTASGRWFIWMNYGVHALMYSYYALRSLKFRLPKQMAMVVTTLQLAQMVMGVIIGVTVYRIKSSGEYCQQTWDNLGLCFGVYFTYFLLFANFFYHAYVKKNNRYTEVKKDKKEKEEPVDFEILEPKEDINANIAEPSITTRSAAARRKVQKAD</sequence>
<protein>
    <recommendedName>
        <fullName evidence="4">Putative fatty acid elongase 3</fullName>
        <ecNumber>2.3.1.199</ecNumber>
    </recommendedName>
    <alternativeName>
        <fullName>3-keto acyl-CoA synthase elo-3</fullName>
    </alternativeName>
    <alternativeName>
        <fullName>Putative fatty acid elongation protein 3</fullName>
    </alternativeName>
    <alternativeName>
        <fullName>Very-long-chain 3-oxoacyl-CoA synthase 3</fullName>
    </alternativeName>
</protein>
<dbReference type="EC" id="2.3.1.199"/>
<dbReference type="EMBL" id="FO080386">
    <property type="protein sequence ID" value="CCD63356.1"/>
    <property type="molecule type" value="Genomic_DNA"/>
</dbReference>
<dbReference type="PIR" id="T34200">
    <property type="entry name" value="T34200"/>
</dbReference>
<dbReference type="RefSeq" id="NP_001255291.1">
    <property type="nucleotide sequence ID" value="NM_001268362.1"/>
</dbReference>
<dbReference type="RefSeq" id="NP_001367447.1">
    <property type="nucleotide sequence ID" value="NM_001380316.2"/>
</dbReference>
<dbReference type="SMR" id="P49191"/>
<dbReference type="BioGRID" id="48753">
    <property type="interactions" value="1"/>
</dbReference>
<dbReference type="FunCoup" id="P49191">
    <property type="interactions" value="1869"/>
</dbReference>
<dbReference type="STRING" id="6239.D2024.3.1"/>
<dbReference type="GlyCosmos" id="P49191">
    <property type="glycosylation" value="1 site, No reported glycans"/>
</dbReference>
<dbReference type="iPTMnet" id="P49191"/>
<dbReference type="PeptideAtlas" id="P49191"/>
<dbReference type="EnsemblMetazoa" id="D2024.3.1">
    <property type="protein sequence ID" value="D2024.3.1"/>
    <property type="gene ID" value="WBGene00001241"/>
</dbReference>
<dbReference type="GeneID" id="183948"/>
<dbReference type="UCSC" id="D2024.3">
    <property type="organism name" value="c. elegans"/>
</dbReference>
<dbReference type="AGR" id="WB:WBGene00001241"/>
<dbReference type="WormBase" id="D2024.3">
    <property type="protein sequence ID" value="CE34783"/>
    <property type="gene ID" value="WBGene00001241"/>
    <property type="gene designation" value="elo-3"/>
</dbReference>
<dbReference type="GeneTree" id="ENSGT01050000244965"/>
<dbReference type="HOGENOM" id="CLU_048483_1_2_1"/>
<dbReference type="InParanoid" id="P49191"/>
<dbReference type="OMA" id="PISWVPI"/>
<dbReference type="OrthoDB" id="10259681at2759"/>
<dbReference type="PhylomeDB" id="P49191"/>
<dbReference type="Reactome" id="R-CEL-2046105">
    <property type="pathway name" value="Linoleic acid (LA) metabolism"/>
</dbReference>
<dbReference type="Reactome" id="R-CEL-2046106">
    <property type="pathway name" value="alpha-linolenic acid (ALA) metabolism"/>
</dbReference>
<dbReference type="Reactome" id="R-CEL-75876">
    <property type="pathway name" value="Synthesis of very long-chain fatty acyl-CoAs"/>
</dbReference>
<dbReference type="UniPathway" id="UPA00094"/>
<dbReference type="PRO" id="PR:P49191"/>
<dbReference type="Proteomes" id="UP000001940">
    <property type="component" value="Chromosome IV"/>
</dbReference>
<dbReference type="Bgee" id="WBGene00001241">
    <property type="expression patterns" value="Expressed in pharyngeal muscle cell (C elegans) and 3 other cell types or tissues"/>
</dbReference>
<dbReference type="GO" id="GO:0005789">
    <property type="term" value="C:endoplasmic reticulum membrane"/>
    <property type="evidence" value="ECO:0000250"/>
    <property type="project" value="UniProtKB"/>
</dbReference>
<dbReference type="GO" id="GO:0009922">
    <property type="term" value="F:fatty acid elongase activity"/>
    <property type="evidence" value="ECO:0000318"/>
    <property type="project" value="GO_Central"/>
</dbReference>
<dbReference type="GO" id="GO:0034625">
    <property type="term" value="P:fatty acid elongation, monounsaturated fatty acid"/>
    <property type="evidence" value="ECO:0000318"/>
    <property type="project" value="GO_Central"/>
</dbReference>
<dbReference type="GO" id="GO:0034626">
    <property type="term" value="P:fatty acid elongation, polyunsaturated fatty acid"/>
    <property type="evidence" value="ECO:0000318"/>
    <property type="project" value="GO_Central"/>
</dbReference>
<dbReference type="GO" id="GO:0019367">
    <property type="term" value="P:fatty acid elongation, saturated fatty acid"/>
    <property type="evidence" value="ECO:0000318"/>
    <property type="project" value="GO_Central"/>
</dbReference>
<dbReference type="GO" id="GO:0030148">
    <property type="term" value="P:sphingolipid biosynthetic process"/>
    <property type="evidence" value="ECO:0000318"/>
    <property type="project" value="GO_Central"/>
</dbReference>
<dbReference type="GO" id="GO:0042761">
    <property type="term" value="P:very long-chain fatty acid biosynthetic process"/>
    <property type="evidence" value="ECO:0000318"/>
    <property type="project" value="GO_Central"/>
</dbReference>
<dbReference type="InterPro" id="IPR030457">
    <property type="entry name" value="ELO_CS"/>
</dbReference>
<dbReference type="InterPro" id="IPR002076">
    <property type="entry name" value="ELO_fam"/>
</dbReference>
<dbReference type="PANTHER" id="PTHR11157:SF17">
    <property type="entry name" value="ELONGATION OF VERY LONG CHAIN FATTY ACIDS PROTEIN 6"/>
    <property type="match status" value="1"/>
</dbReference>
<dbReference type="PANTHER" id="PTHR11157">
    <property type="entry name" value="FATTY ACID ACYL TRANSFERASE-RELATED"/>
    <property type="match status" value="1"/>
</dbReference>
<dbReference type="Pfam" id="PF01151">
    <property type="entry name" value="ELO"/>
    <property type="match status" value="1"/>
</dbReference>
<dbReference type="PROSITE" id="PS01188">
    <property type="entry name" value="ELO"/>
    <property type="match status" value="1"/>
</dbReference>
<proteinExistence type="evidence at protein level"/>